<comment type="function">
    <text evidence="1">Catalyzes the initial reaction in the xylose utilization pathway by reducing D-xylose into xylitol. Xylose is a major component of hemicelluloses such as xylan. Most fungi utilize D-xylose via three enzymatic reactions, xylose reductase (XR), xylitol dehydrogenase (XDH), and xylulokinase, to form xylulose 5-phosphate, which enters pentose phosphate pathway (By similarity).</text>
</comment>
<comment type="catalytic activity">
    <reaction>
        <text>xylitol + NAD(+) = D-xylose + NADH + H(+)</text>
        <dbReference type="Rhea" id="RHEA:27441"/>
        <dbReference type="ChEBI" id="CHEBI:15378"/>
        <dbReference type="ChEBI" id="CHEBI:17151"/>
        <dbReference type="ChEBI" id="CHEBI:53455"/>
        <dbReference type="ChEBI" id="CHEBI:57540"/>
        <dbReference type="ChEBI" id="CHEBI:57945"/>
        <dbReference type="EC" id="1.1.1.307"/>
    </reaction>
</comment>
<comment type="catalytic activity">
    <reaction>
        <text>xylitol + NADP(+) = D-xylose + NADPH + H(+)</text>
        <dbReference type="Rhea" id="RHEA:27445"/>
        <dbReference type="ChEBI" id="CHEBI:15378"/>
        <dbReference type="ChEBI" id="CHEBI:17151"/>
        <dbReference type="ChEBI" id="CHEBI:53455"/>
        <dbReference type="ChEBI" id="CHEBI:57783"/>
        <dbReference type="ChEBI" id="CHEBI:58349"/>
        <dbReference type="EC" id="1.1.1.307"/>
    </reaction>
</comment>
<comment type="pathway">
    <text>Carbohydrate metabolism; D-xylose degradation.</text>
</comment>
<comment type="similarity">
    <text evidence="2">Belongs to the aldo/keto reductase family.</text>
</comment>
<evidence type="ECO:0000250" key="1"/>
<evidence type="ECO:0000305" key="2"/>
<accession>Q0CUL0</accession>
<gene>
    <name type="primary">xyl1</name>
    <name type="ORF">ATEG_02624</name>
</gene>
<protein>
    <recommendedName>
        <fullName>Probable NAD(P)H-dependent D-xylose reductase xyl1</fullName>
        <shortName>XR</shortName>
        <ecNumber>1.1.1.307</ecNumber>
    </recommendedName>
</protein>
<reference key="1">
    <citation type="submission" date="2005-09" db="EMBL/GenBank/DDBJ databases">
        <title>Annotation of the Aspergillus terreus NIH2624 genome.</title>
        <authorList>
            <person name="Birren B.W."/>
            <person name="Lander E.S."/>
            <person name="Galagan J.E."/>
            <person name="Nusbaum C."/>
            <person name="Devon K."/>
            <person name="Henn M."/>
            <person name="Ma L.-J."/>
            <person name="Jaffe D.B."/>
            <person name="Butler J."/>
            <person name="Alvarez P."/>
            <person name="Gnerre S."/>
            <person name="Grabherr M."/>
            <person name="Kleber M."/>
            <person name="Mauceli E.W."/>
            <person name="Brockman W."/>
            <person name="Rounsley S."/>
            <person name="Young S.K."/>
            <person name="LaButti K."/>
            <person name="Pushparaj V."/>
            <person name="DeCaprio D."/>
            <person name="Crawford M."/>
            <person name="Koehrsen M."/>
            <person name="Engels R."/>
            <person name="Montgomery P."/>
            <person name="Pearson M."/>
            <person name="Howarth C."/>
            <person name="Larson L."/>
            <person name="Luoma S."/>
            <person name="White J."/>
            <person name="Alvarado L."/>
            <person name="Kodira C.D."/>
            <person name="Zeng Q."/>
            <person name="Oleary S."/>
            <person name="Yandava C."/>
            <person name="Denning D.W."/>
            <person name="Nierman W.C."/>
            <person name="Milne T."/>
            <person name="Madden K."/>
        </authorList>
    </citation>
    <scope>NUCLEOTIDE SEQUENCE [LARGE SCALE GENOMIC DNA]</scope>
    <source>
        <strain>NIH 2624 / FGSC A1156</strain>
    </source>
</reference>
<name>XYL1_ASPTN</name>
<keyword id="KW-0119">Carbohydrate metabolism</keyword>
<keyword id="KW-0520">NAD</keyword>
<keyword id="KW-0521">NADP</keyword>
<keyword id="KW-0560">Oxidoreductase</keyword>
<keyword id="KW-1185">Reference proteome</keyword>
<keyword id="KW-0859">Xylose metabolism</keyword>
<dbReference type="EC" id="1.1.1.307"/>
<dbReference type="EMBL" id="CH476596">
    <property type="protein sequence ID" value="EAU37586.1"/>
    <property type="molecule type" value="Genomic_DNA"/>
</dbReference>
<dbReference type="RefSeq" id="XP_001211802.1">
    <property type="nucleotide sequence ID" value="XM_001211802.1"/>
</dbReference>
<dbReference type="SMR" id="Q0CUL0"/>
<dbReference type="STRING" id="341663.Q0CUL0"/>
<dbReference type="EnsemblFungi" id="EAU37586">
    <property type="protein sequence ID" value="EAU37586"/>
    <property type="gene ID" value="ATEG_02624"/>
</dbReference>
<dbReference type="GeneID" id="4317317"/>
<dbReference type="VEuPathDB" id="FungiDB:ATEG_02624"/>
<dbReference type="eggNOG" id="KOG1577">
    <property type="taxonomic scope" value="Eukaryota"/>
</dbReference>
<dbReference type="HOGENOM" id="CLU_023205_0_0_1"/>
<dbReference type="OMA" id="VHWPSEG"/>
<dbReference type="OrthoDB" id="416253at2759"/>
<dbReference type="UniPathway" id="UPA00810"/>
<dbReference type="Proteomes" id="UP000007963">
    <property type="component" value="Unassembled WGS sequence"/>
</dbReference>
<dbReference type="GO" id="GO:0032866">
    <property type="term" value="F:D-xylose reductase (NADPH) activity"/>
    <property type="evidence" value="ECO:0007669"/>
    <property type="project" value="InterPro"/>
</dbReference>
<dbReference type="GO" id="GO:0042843">
    <property type="term" value="P:D-xylose catabolic process"/>
    <property type="evidence" value="ECO:0007669"/>
    <property type="project" value="UniProtKB-UniPathway"/>
</dbReference>
<dbReference type="CDD" id="cd19115">
    <property type="entry name" value="AKR_AKR2D1"/>
    <property type="match status" value="1"/>
</dbReference>
<dbReference type="FunFam" id="3.20.20.100:FF:000007">
    <property type="entry name" value="NAD(P)H-dependent D-xylose reductase xyl1"/>
    <property type="match status" value="1"/>
</dbReference>
<dbReference type="Gene3D" id="3.20.20.100">
    <property type="entry name" value="NADP-dependent oxidoreductase domain"/>
    <property type="match status" value="1"/>
</dbReference>
<dbReference type="InterPro" id="IPR020471">
    <property type="entry name" value="AKR"/>
</dbReference>
<dbReference type="InterPro" id="IPR044487">
    <property type="entry name" value="AKR2D"/>
</dbReference>
<dbReference type="InterPro" id="IPR018170">
    <property type="entry name" value="Aldo/ket_reductase_CS"/>
</dbReference>
<dbReference type="InterPro" id="IPR023210">
    <property type="entry name" value="NADP_OxRdtase_dom"/>
</dbReference>
<dbReference type="InterPro" id="IPR036812">
    <property type="entry name" value="NADP_OxRdtase_dom_sf"/>
</dbReference>
<dbReference type="PANTHER" id="PTHR11732">
    <property type="entry name" value="ALDO/KETO REDUCTASE"/>
    <property type="match status" value="1"/>
</dbReference>
<dbReference type="Pfam" id="PF00248">
    <property type="entry name" value="Aldo_ket_red"/>
    <property type="match status" value="1"/>
</dbReference>
<dbReference type="PIRSF" id="PIRSF000097">
    <property type="entry name" value="AKR"/>
    <property type="match status" value="1"/>
</dbReference>
<dbReference type="PRINTS" id="PR00069">
    <property type="entry name" value="ALDKETRDTASE"/>
</dbReference>
<dbReference type="SUPFAM" id="SSF51430">
    <property type="entry name" value="NAD(P)-linked oxidoreductase"/>
    <property type="match status" value="1"/>
</dbReference>
<dbReference type="PROSITE" id="PS00798">
    <property type="entry name" value="ALDOKETO_REDUCTASE_1"/>
    <property type="match status" value="1"/>
</dbReference>
<dbReference type="PROSITE" id="PS00062">
    <property type="entry name" value="ALDOKETO_REDUCTASE_2"/>
    <property type="match status" value="1"/>
</dbReference>
<dbReference type="PROSITE" id="PS00063">
    <property type="entry name" value="ALDOKETO_REDUCTASE_3"/>
    <property type="match status" value="1"/>
</dbReference>
<proteinExistence type="inferred from homology"/>
<feature type="chain" id="PRO_0000393502" description="Probable NAD(P)H-dependent D-xylose reductase xyl1">
    <location>
        <begin position="1"/>
        <end position="320"/>
    </location>
</feature>
<feature type="active site" description="Proton donor" evidence="1">
    <location>
        <position position="50"/>
    </location>
</feature>
<feature type="binding site" evidence="1">
    <location>
        <position position="112"/>
    </location>
    <ligand>
        <name>substrate</name>
    </ligand>
</feature>
<feature type="binding site" evidence="1">
    <location>
        <begin position="167"/>
        <end position="168"/>
    </location>
    <ligand>
        <name>NAD(+)</name>
        <dbReference type="ChEBI" id="CHEBI:57540"/>
    </ligand>
</feature>
<feature type="binding site" evidence="1">
    <location>
        <begin position="216"/>
        <end position="225"/>
    </location>
    <ligand>
        <name>NAD(+)</name>
        <dbReference type="ChEBI" id="CHEBI:57540"/>
    </ligand>
</feature>
<feature type="binding site" evidence="1">
    <location>
        <begin position="272"/>
        <end position="282"/>
    </location>
    <ligand>
        <name>NAD(+)</name>
        <dbReference type="ChEBI" id="CHEBI:57540"/>
    </ligand>
</feature>
<feature type="site" description="Lowers pKa of active site Tyr" evidence="1">
    <location>
        <position position="79"/>
    </location>
</feature>
<sequence length="320" mass="35691">MATPTIKLNSGFDMPLVGFGLWKVNNDTCADQVYEAIKAGYRLFDGACDYGNEVEAGQGVARAIKEGIVKREELFIVSKLWNSFHDGDKVEPICRKQLADWGVDYFDLYIVHFPVALKYVDPAVRYPPGWSAKGDGSIEFSNASIQETWTAMETLVDKKLARSIGVSNFSAQLLMDLLRYARVRPATLQIEHHPYLTQPRLVEYAQKEGIAVTAYSSFGPLSFLELQVPNATNISPLFEHDVVKSVADKHGKTPAQVLLRWSTQRGIAVIPKSNNPTRLSQNLEVTGWDLEQSEIDAISALDIGLRFNDPIGYGMYVPIF</sequence>
<organism>
    <name type="scientific">Aspergillus terreus (strain NIH 2624 / FGSC A1156)</name>
    <dbReference type="NCBI Taxonomy" id="341663"/>
    <lineage>
        <taxon>Eukaryota</taxon>
        <taxon>Fungi</taxon>
        <taxon>Dikarya</taxon>
        <taxon>Ascomycota</taxon>
        <taxon>Pezizomycotina</taxon>
        <taxon>Eurotiomycetes</taxon>
        <taxon>Eurotiomycetidae</taxon>
        <taxon>Eurotiales</taxon>
        <taxon>Aspergillaceae</taxon>
        <taxon>Aspergillus</taxon>
        <taxon>Aspergillus subgen. Circumdati</taxon>
    </lineage>
</organism>